<feature type="chain" id="PRO_0000453544" description="Polyamine export protein">
    <location>
        <begin position="1"/>
        <end position="447"/>
    </location>
</feature>
<feature type="topological domain" description="Cytoplasmic" evidence="7">
    <location>
        <begin position="1"/>
        <end position="4"/>
    </location>
</feature>
<feature type="transmembrane region" description="Helical" evidence="2">
    <location>
        <begin position="5"/>
        <end position="25"/>
    </location>
</feature>
<feature type="topological domain" description="Periplasmic" evidence="7">
    <location>
        <begin position="26"/>
        <end position="54"/>
    </location>
</feature>
<feature type="transmembrane region" description="Helical" evidence="2">
    <location>
        <begin position="55"/>
        <end position="75"/>
    </location>
</feature>
<feature type="topological domain" description="Cytoplasmic" evidence="7">
    <location>
        <begin position="76"/>
        <end position="99"/>
    </location>
</feature>
<feature type="transmembrane region" description="Helical" evidence="2">
    <location>
        <begin position="100"/>
        <end position="120"/>
    </location>
</feature>
<feature type="topological domain" description="Periplasmic" evidence="7">
    <location>
        <begin position="121"/>
        <end position="141"/>
    </location>
</feature>
<feature type="transmembrane region" description="Helical" evidence="2">
    <location>
        <begin position="142"/>
        <end position="162"/>
    </location>
</feature>
<feature type="topological domain" description="Cytoplasmic" evidence="1">
    <location>
        <begin position="163"/>
        <end position="447"/>
    </location>
</feature>
<feature type="domain" description="CNNM transmembrane" evidence="4">
    <location>
        <begin position="1"/>
        <end position="197"/>
    </location>
</feature>
<feature type="domain" description="CBS 1" evidence="3">
    <location>
        <begin position="216"/>
        <end position="275"/>
    </location>
</feature>
<feature type="domain" description="CBS 2" evidence="3">
    <location>
        <begin position="282"/>
        <end position="343"/>
    </location>
</feature>
<evidence type="ECO:0000250" key="1">
    <source>
        <dbReference type="UniProtKB" id="P0AE45"/>
    </source>
</evidence>
<evidence type="ECO:0000255" key="2"/>
<evidence type="ECO:0000255" key="3">
    <source>
        <dbReference type="PROSITE-ProRule" id="PRU00703"/>
    </source>
</evidence>
<evidence type="ECO:0000255" key="4">
    <source>
        <dbReference type="PROSITE-ProRule" id="PRU01193"/>
    </source>
</evidence>
<evidence type="ECO:0000269" key="5">
    <source>
    </source>
</evidence>
<evidence type="ECO:0000303" key="6">
    <source>
    </source>
</evidence>
<evidence type="ECO:0000305" key="7"/>
<evidence type="ECO:0000312" key="8">
    <source>
        <dbReference type="EMBL" id="ACY91628.1"/>
    </source>
</evidence>
<protein>
    <recommendedName>
        <fullName evidence="6">Polyamine export protein</fullName>
    </recommendedName>
</protein>
<reference key="1">
    <citation type="journal article" date="2010" name="J. Bacteriol.">
        <title>Short-term signatures of evolutionary change in the Salmonella enterica serovar typhimurium 14028 genome.</title>
        <authorList>
            <person name="Jarvik T."/>
            <person name="Smillie C."/>
            <person name="Groisman E.A."/>
            <person name="Ochman H."/>
        </authorList>
    </citation>
    <scope>NUCLEOTIDE SEQUENCE [LARGE SCALE GENOMIC DNA]</scope>
    <source>
        <strain>14028s / SGSC 2262</strain>
    </source>
</reference>
<reference key="2">
    <citation type="journal article" date="2021" name="Mol. Microbiol.">
        <title>PaeA (YtfL) protects from cadaverine and putrescine stress in Salmonella Typhimurium and E. coli.</title>
        <authorList>
            <person name="Iwadate Y."/>
            <person name="Ramezanifard R."/>
            <person name="Golubeva Y.A."/>
            <person name="Fenlon L.A."/>
            <person name="Slauch J.M."/>
        </authorList>
    </citation>
    <scope>FUNCTION</scope>
    <scope>DISRUPTION PHENOTYPE</scope>
    <source>
        <strain>ATCC 14028</strain>
    </source>
</reference>
<keyword id="KW-0129">CBS domain</keyword>
<keyword id="KW-0997">Cell inner membrane</keyword>
<keyword id="KW-1003">Cell membrane</keyword>
<keyword id="KW-0472">Membrane</keyword>
<keyword id="KW-0677">Repeat</keyword>
<keyword id="KW-0812">Transmembrane</keyword>
<keyword id="KW-1133">Transmembrane helix</keyword>
<keyword id="KW-0813">Transport</keyword>
<comment type="function">
    <text evidence="5">Involved in cadaverine and putrescine tolerance in stationary phase. May facilitate the efflux of both cadaverine and putrescine from the cytoplasm, reducing potentially toxic levels under certain stress conditions.</text>
</comment>
<comment type="subcellular location">
    <subcellularLocation>
        <location evidence="1">Cell inner membrane</location>
        <topology evidence="2">Multi-pass membrane protein</topology>
    </subcellularLocation>
</comment>
<comment type="disruption phenotype">
    <text evidence="5">Deletion mutant loses viability in stationary phase when grown in acidic medium with nitrite. Mutant is sensitive to cadaverine and putrescine but not to spermine or spermidine at pH 9.</text>
</comment>
<comment type="similarity">
    <text evidence="7">Belongs to the UPF0053 family. PaeA subfamily.</text>
</comment>
<gene>
    <name evidence="6" type="primary">paeA</name>
    <name evidence="8" type="synonym">ytfL</name>
    <name evidence="8" type="ordered locus">STM14_5293</name>
</gene>
<proteinExistence type="inferred from homology"/>
<name>PAEA_SALT1</name>
<organism>
    <name type="scientific">Salmonella typhimurium (strain 14028s / SGSC 2262)</name>
    <dbReference type="NCBI Taxonomy" id="588858"/>
    <lineage>
        <taxon>Bacteria</taxon>
        <taxon>Pseudomonadati</taxon>
        <taxon>Pseudomonadota</taxon>
        <taxon>Gammaproteobacteria</taxon>
        <taxon>Enterobacterales</taxon>
        <taxon>Enterobacteriaceae</taxon>
        <taxon>Salmonella</taxon>
    </lineage>
</organism>
<sequence length="447" mass="49768">MLNSIFIIFCLIAVSAFFSISEISLAASRKIKLKLLADEGSINAQRVLKMQENPGMFFTVVQIGLNAVAILGGIVGDAAFSPAFSALFSHYMSPELSEQLSFILSFSLVTGLFILFADLTPKRIGMIAPEAVALRIINPMRFCLFVFRPLVWLFNGMANNIFRLFKIPMVRKDDITSDDIYAVVEAGALAGVLRKQEHELIENVFELESRTVPSSMTSRESIIWFDLHEDEQSLKKKVAEHPHSKFLVCNEDIDHIIGYVDSKDLLNRVLANQSMALNSGVQIRNTLIVPDTLTLSEALESFKTAGEDFAVIMNEYALVVGIITLNDVMTTLMGDLVGQGLEEQIVARDENSWLVDGGTPIDDVMRVLDIDEFPQSGNYETIGGFMMFMLRKIPKRTDSVKFSGYKFEVVDIDNYRIDQLLVTRLDNKSNVPAPKLPDAQGKEDSAA</sequence>
<accession>A0A0F6BAS6</accession>
<dbReference type="EMBL" id="CP001363">
    <property type="protein sequence ID" value="ACY91628.1"/>
    <property type="molecule type" value="Genomic_DNA"/>
</dbReference>
<dbReference type="RefSeq" id="WP_000934974.1">
    <property type="nucleotide sequence ID" value="NZ_CP043402.1"/>
</dbReference>
<dbReference type="SMR" id="A0A0F6BAS6"/>
<dbReference type="KEGG" id="seo:STM14_5293"/>
<dbReference type="PATRIC" id="fig|588858.6.peg.4790"/>
<dbReference type="HOGENOM" id="CLU_015237_4_0_6"/>
<dbReference type="BioCyc" id="SENT588858:STM14_RS23115-MONOMER"/>
<dbReference type="Proteomes" id="UP000002695">
    <property type="component" value="Chromosome"/>
</dbReference>
<dbReference type="GO" id="GO:0005886">
    <property type="term" value="C:plasma membrane"/>
    <property type="evidence" value="ECO:0007669"/>
    <property type="project" value="UniProtKB-SubCell"/>
</dbReference>
<dbReference type="GO" id="GO:0050660">
    <property type="term" value="F:flavin adenine dinucleotide binding"/>
    <property type="evidence" value="ECO:0007669"/>
    <property type="project" value="InterPro"/>
</dbReference>
<dbReference type="CDD" id="cd04590">
    <property type="entry name" value="CBS_pair_CorC_HlyC_assoc"/>
    <property type="match status" value="1"/>
</dbReference>
<dbReference type="FunFam" id="3.10.580.10:FF:000005">
    <property type="entry name" value="HlyC/CorC family transporter"/>
    <property type="match status" value="1"/>
</dbReference>
<dbReference type="FunFam" id="3.30.465.10:FF:000002">
    <property type="entry name" value="HlyC/CorC family transporter"/>
    <property type="match status" value="1"/>
</dbReference>
<dbReference type="Gene3D" id="3.30.465.10">
    <property type="match status" value="1"/>
</dbReference>
<dbReference type="Gene3D" id="3.10.580.10">
    <property type="entry name" value="CBS-domain"/>
    <property type="match status" value="1"/>
</dbReference>
<dbReference type="InterPro" id="IPR000644">
    <property type="entry name" value="CBS_dom"/>
</dbReference>
<dbReference type="InterPro" id="IPR046342">
    <property type="entry name" value="CBS_dom_sf"/>
</dbReference>
<dbReference type="InterPro" id="IPR002550">
    <property type="entry name" value="CNNM"/>
</dbReference>
<dbReference type="InterPro" id="IPR036318">
    <property type="entry name" value="FAD-bd_PCMH-like_sf"/>
</dbReference>
<dbReference type="InterPro" id="IPR016169">
    <property type="entry name" value="FAD-bd_PCMH_sub2"/>
</dbReference>
<dbReference type="InterPro" id="IPR044751">
    <property type="entry name" value="Ion_transp-like_CBS"/>
</dbReference>
<dbReference type="InterPro" id="IPR005170">
    <property type="entry name" value="Transptr-assoc_dom"/>
</dbReference>
<dbReference type="PANTHER" id="PTHR22777">
    <property type="entry name" value="HEMOLYSIN-RELATED"/>
    <property type="match status" value="1"/>
</dbReference>
<dbReference type="PANTHER" id="PTHR22777:SF16">
    <property type="entry name" value="POLYAMINE EXPORT PROTEIN"/>
    <property type="match status" value="1"/>
</dbReference>
<dbReference type="Pfam" id="PF00571">
    <property type="entry name" value="CBS"/>
    <property type="match status" value="1"/>
</dbReference>
<dbReference type="Pfam" id="PF01595">
    <property type="entry name" value="CNNM"/>
    <property type="match status" value="1"/>
</dbReference>
<dbReference type="Pfam" id="PF03471">
    <property type="entry name" value="CorC_HlyC"/>
    <property type="match status" value="1"/>
</dbReference>
<dbReference type="SMART" id="SM01091">
    <property type="entry name" value="CorC_HlyC"/>
    <property type="match status" value="1"/>
</dbReference>
<dbReference type="SUPFAM" id="SSF54631">
    <property type="entry name" value="CBS-domain pair"/>
    <property type="match status" value="1"/>
</dbReference>
<dbReference type="SUPFAM" id="SSF56176">
    <property type="entry name" value="FAD-binding/transporter-associated domain-like"/>
    <property type="match status" value="1"/>
</dbReference>
<dbReference type="PROSITE" id="PS51371">
    <property type="entry name" value="CBS"/>
    <property type="match status" value="2"/>
</dbReference>
<dbReference type="PROSITE" id="PS51846">
    <property type="entry name" value="CNNM"/>
    <property type="match status" value="1"/>
</dbReference>